<organism>
    <name type="scientific">Helicobacter pylori (strain ATCC 700392 / 26695)</name>
    <name type="common">Campylobacter pylori</name>
    <dbReference type="NCBI Taxonomy" id="85962"/>
    <lineage>
        <taxon>Bacteria</taxon>
        <taxon>Pseudomonadati</taxon>
        <taxon>Campylobacterota</taxon>
        <taxon>Epsilonproteobacteria</taxon>
        <taxon>Campylobacterales</taxon>
        <taxon>Helicobacteraceae</taxon>
        <taxon>Helicobacter</taxon>
    </lineage>
</organism>
<accession>O25901</accession>
<keyword id="KW-0997">Cell inner membrane</keyword>
<keyword id="KW-1003">Cell membrane</keyword>
<keyword id="KW-0170">Cobalt</keyword>
<keyword id="KW-0406">Ion transport</keyword>
<keyword id="KW-0460">Magnesium</keyword>
<keyword id="KW-0472">Membrane</keyword>
<keyword id="KW-0533">Nickel</keyword>
<keyword id="KW-1185">Reference proteome</keyword>
<keyword id="KW-0812">Transmembrane</keyword>
<keyword id="KW-1133">Transmembrane helix</keyword>
<keyword id="KW-0813">Transport</keyword>
<protein>
    <recommendedName>
        <fullName>Magnesium transport protein CorA</fullName>
    </recommendedName>
</protein>
<reference key="1">
    <citation type="journal article" date="1997" name="Nature">
        <title>The complete genome sequence of the gastric pathogen Helicobacter pylori.</title>
        <authorList>
            <person name="Tomb J.-F."/>
            <person name="White O."/>
            <person name="Kerlavage A.R."/>
            <person name="Clayton R.A."/>
            <person name="Sutton G.G."/>
            <person name="Fleischmann R.D."/>
            <person name="Ketchum K.A."/>
            <person name="Klenk H.-P."/>
            <person name="Gill S.R."/>
            <person name="Dougherty B.A."/>
            <person name="Nelson K.E."/>
            <person name="Quackenbush J."/>
            <person name="Zhou L."/>
            <person name="Kirkness E.F."/>
            <person name="Peterson S.N."/>
            <person name="Loftus B.J."/>
            <person name="Richardson D.L."/>
            <person name="Dodson R.J."/>
            <person name="Khalak H.G."/>
            <person name="Glodek A."/>
            <person name="McKenney K."/>
            <person name="FitzGerald L.M."/>
            <person name="Lee N."/>
            <person name="Adams M.D."/>
            <person name="Hickey E.K."/>
            <person name="Berg D.E."/>
            <person name="Gocayne J.D."/>
            <person name="Utterback T.R."/>
            <person name="Peterson J.D."/>
            <person name="Kelley J.M."/>
            <person name="Cotton M.D."/>
            <person name="Weidman J.F."/>
            <person name="Fujii C."/>
            <person name="Bowman C."/>
            <person name="Watthey L."/>
            <person name="Wallin E."/>
            <person name="Hayes W.S."/>
            <person name="Borodovsky M."/>
            <person name="Karp P.D."/>
            <person name="Smith H.O."/>
            <person name="Fraser C.M."/>
            <person name="Venter J.C."/>
        </authorList>
    </citation>
    <scope>NUCLEOTIDE SEQUENCE [LARGE SCALE GENOMIC DNA]</scope>
    <source>
        <strain>ATCC 700392 / 26695</strain>
    </source>
</reference>
<reference key="2">
    <citation type="journal article" date="2002" name="Infect. Immun.">
        <title>Magnesium uptake by CorA is essential for viability of the gastric pathogen Helicobacter pylori.</title>
        <authorList>
            <person name="Pfeiffer J."/>
            <person name="Guhl J."/>
            <person name="Waidner B."/>
            <person name="Kist M."/>
            <person name="Bereswill S."/>
        </authorList>
    </citation>
    <scope>FUNCTION</scope>
    <scope>CATALYTIC ACTIVITY</scope>
    <scope>SUBCELLULAR LOCATION</scope>
    <source>
        <strain>ATCC 700392 / 26695</strain>
    </source>
</reference>
<dbReference type="EMBL" id="AE000511">
    <property type="protein sequence ID" value="AAD08385.1"/>
    <property type="molecule type" value="Genomic_DNA"/>
</dbReference>
<dbReference type="PIR" id="H64687">
    <property type="entry name" value="H64687"/>
</dbReference>
<dbReference type="RefSeq" id="NP_208136.1">
    <property type="nucleotide sequence ID" value="NC_000915.1"/>
</dbReference>
<dbReference type="RefSeq" id="WP_000248522.1">
    <property type="nucleotide sequence ID" value="NC_018939.1"/>
</dbReference>
<dbReference type="SMR" id="O25901"/>
<dbReference type="FunCoup" id="O25901">
    <property type="interactions" value="73"/>
</dbReference>
<dbReference type="IntAct" id="O25901">
    <property type="interactions" value="1"/>
</dbReference>
<dbReference type="MINT" id="O25901"/>
<dbReference type="STRING" id="85962.HP_1344"/>
<dbReference type="PaxDb" id="85962-C694_06935"/>
<dbReference type="EnsemblBacteria" id="AAD08385">
    <property type="protein sequence ID" value="AAD08385"/>
    <property type="gene ID" value="HP_1344"/>
</dbReference>
<dbReference type="KEGG" id="heo:C694_06935"/>
<dbReference type="KEGG" id="hpy:HP_1344"/>
<dbReference type="PATRIC" id="fig|85962.47.peg.1439"/>
<dbReference type="eggNOG" id="COG0598">
    <property type="taxonomic scope" value="Bacteria"/>
</dbReference>
<dbReference type="InParanoid" id="O25901"/>
<dbReference type="OrthoDB" id="9803416at2"/>
<dbReference type="PhylomeDB" id="O25901"/>
<dbReference type="Proteomes" id="UP000000429">
    <property type="component" value="Chromosome"/>
</dbReference>
<dbReference type="GO" id="GO:0005886">
    <property type="term" value="C:plasma membrane"/>
    <property type="evidence" value="ECO:0007669"/>
    <property type="project" value="UniProtKB-SubCell"/>
</dbReference>
<dbReference type="GO" id="GO:0015087">
    <property type="term" value="F:cobalt ion transmembrane transporter activity"/>
    <property type="evidence" value="ECO:0000318"/>
    <property type="project" value="GO_Central"/>
</dbReference>
<dbReference type="GO" id="GO:0015095">
    <property type="term" value="F:magnesium ion transmembrane transporter activity"/>
    <property type="evidence" value="ECO:0000318"/>
    <property type="project" value="GO_Central"/>
</dbReference>
<dbReference type="GO" id="GO:0015099">
    <property type="term" value="F:nickel cation transmembrane transporter activity"/>
    <property type="evidence" value="ECO:0000318"/>
    <property type="project" value="GO_Central"/>
</dbReference>
<dbReference type="CDD" id="cd12836">
    <property type="entry name" value="HpCorA-like"/>
    <property type="match status" value="1"/>
</dbReference>
<dbReference type="FunFam" id="1.20.58.340:FF:000001">
    <property type="entry name" value="Magnesium transport protein CorA"/>
    <property type="match status" value="1"/>
</dbReference>
<dbReference type="Gene3D" id="3.30.460.20">
    <property type="entry name" value="CorA soluble domain-like"/>
    <property type="match status" value="1"/>
</dbReference>
<dbReference type="Gene3D" id="1.20.58.340">
    <property type="entry name" value="Magnesium transport protein CorA, transmembrane region"/>
    <property type="match status" value="1"/>
</dbReference>
<dbReference type="InterPro" id="IPR045861">
    <property type="entry name" value="CorA_cytoplasmic_dom"/>
</dbReference>
<dbReference type="InterPro" id="IPR050829">
    <property type="entry name" value="CorA_MIT"/>
</dbReference>
<dbReference type="InterPro" id="IPR045863">
    <property type="entry name" value="CorA_TM1_TM2"/>
</dbReference>
<dbReference type="InterPro" id="IPR004488">
    <property type="entry name" value="Mg/Co-transport_prot_CorA"/>
</dbReference>
<dbReference type="InterPro" id="IPR002523">
    <property type="entry name" value="MgTranspt_CorA/ZnTranspt_ZntB"/>
</dbReference>
<dbReference type="NCBIfam" id="TIGR00383">
    <property type="entry name" value="corA"/>
    <property type="match status" value="1"/>
</dbReference>
<dbReference type="PANTHER" id="PTHR47685">
    <property type="entry name" value="MAGNESIUM TRANSPORT PROTEIN CORA"/>
    <property type="match status" value="1"/>
</dbReference>
<dbReference type="PANTHER" id="PTHR47685:SF1">
    <property type="entry name" value="MAGNESIUM TRANSPORT PROTEIN CORA"/>
    <property type="match status" value="1"/>
</dbReference>
<dbReference type="Pfam" id="PF01544">
    <property type="entry name" value="CorA"/>
    <property type="match status" value="1"/>
</dbReference>
<dbReference type="SUPFAM" id="SSF143865">
    <property type="entry name" value="CorA soluble domain-like"/>
    <property type="match status" value="1"/>
</dbReference>
<dbReference type="SUPFAM" id="SSF144083">
    <property type="entry name" value="Magnesium transport protein CorA, transmembrane region"/>
    <property type="match status" value="1"/>
</dbReference>
<proteinExistence type="evidence at protein level"/>
<evidence type="ECO:0000250" key="1">
    <source>
        <dbReference type="UniProtKB" id="Q9WZ31"/>
    </source>
</evidence>
<evidence type="ECO:0000255" key="2"/>
<evidence type="ECO:0000269" key="3">
    <source>
    </source>
</evidence>
<evidence type="ECO:0000305" key="4"/>
<evidence type="ECO:0000305" key="5">
    <source>
    </source>
</evidence>
<feature type="chain" id="PRO_0000239048" description="Magnesium transport protein CorA">
    <location>
        <begin position="1"/>
        <end position="318"/>
    </location>
</feature>
<feature type="transmembrane region" description="Helical" evidence="2">
    <location>
        <begin position="260"/>
        <end position="280"/>
    </location>
</feature>
<feature type="transmembrane region" description="Helical" evidence="2">
    <location>
        <begin position="292"/>
        <end position="312"/>
    </location>
</feature>
<feature type="short sequence motif" description="Probable selectivity filter" evidence="1">
    <location>
        <begin position="279"/>
        <end position="281"/>
    </location>
</feature>
<feature type="site" description="Essential for ion permeation" evidence="1">
    <location>
        <position position="255"/>
    </location>
</feature>
<sequence length="318" mass="37136">MVNVFFKQQKFVIKKRFNDFNGFDIEENEVLWFELINPTPNELATLSQEYAIHYNTDHSQRVSSVTKYWEDSSSVTINAFFTNQDENETFHTEMATFILSNNILFTIYYGTLEIFDSIQKKVLASPKKFEDGFDILTKIFEVYFEKGVECLEWINKQTSLLRKNIIFKETSTHDDILVRLSNLQEFNVTLRDSFFDKRRIITALLRSNKVDSDTKNNLNIILTDFSSLVESTTVNLNSLDNIQNLFASQVNVEQNKIIKLFTVATMAMMPPTLIGTIYGMNFKFMPELEWQYGYLFALIVMAISTILPVIYFKKKGWL</sequence>
<name>CORA_HELPY</name>
<comment type="function">
    <text evidence="1 3">Mediates influx of magnesium ions. Can also mediate cobalt and nickel uptake. Plays a key role in the adaptation to the low magnesium conditions predominant in the gastric environment (PubMed:12065537). Alternates between open and closed states. Activated by low cytoplasmic Mg(2+) levels. Inactive when cytoplasmic Mg(2+) levels are high (By similarity).</text>
</comment>
<comment type="catalytic activity">
    <reaction evidence="3">
        <text>Mg(2+)(in) = Mg(2+)(out)</text>
        <dbReference type="Rhea" id="RHEA:29827"/>
        <dbReference type="ChEBI" id="CHEBI:18420"/>
    </reaction>
</comment>
<comment type="catalytic activity">
    <reaction evidence="3">
        <text>Co(2+)(in) = Co(2+)(out)</text>
        <dbReference type="Rhea" id="RHEA:28578"/>
        <dbReference type="ChEBI" id="CHEBI:48828"/>
    </reaction>
</comment>
<comment type="catalytic activity">
    <reaction evidence="3">
        <text>Ni(2+)(in) = Ni(2+)(out)</text>
        <dbReference type="Rhea" id="RHEA:29831"/>
        <dbReference type="ChEBI" id="CHEBI:49786"/>
    </reaction>
</comment>
<comment type="subunit">
    <text evidence="1">Homopentamer. In the absence of Mg(2+), interactions between subunits are weakened, and dimers, trimers and tetramers can be observed in vitro (By similarity).</text>
</comment>
<comment type="subcellular location">
    <subcellularLocation>
        <location evidence="5">Cell inner membrane</location>
        <topology evidence="1">Multi-pass membrane protein</topology>
    </subcellularLocation>
</comment>
<comment type="domain">
    <text evidence="1">The central ion permeation pathway is formed by the first transmembrane domain from each of the five subunits. Mg(2+) binding strengthens interactions between subunits and leads to the formation of a symmetrical homopentamer surrounding a closed ion permeation pathway. Co(2+) binding also induces a conformation change. Low Mg(2+) concentrations trigger both a conformation change within each subunit and a loosening of the interactions between subunits. This results in an open ion conduction pathway. In addition, this results in a less symmetrical shape of the whole complex.</text>
</comment>
<comment type="similarity">
    <text evidence="4">Belongs to the CorA metal ion transporter (MIT) (TC 1.A.35) family.</text>
</comment>
<gene>
    <name type="primary">corA</name>
    <name type="ordered locus">HP_1344</name>
</gene>